<comment type="function">
    <text evidence="1">Together with its co-chaperonin GroES, plays an essential role in assisting protein folding. The GroEL-GroES system forms a nano-cage that allows encapsulation of the non-native substrate proteins and provides a physical environment optimized to promote and accelerate protein folding.</text>
</comment>
<comment type="catalytic activity">
    <reaction evidence="1">
        <text>ATP + H2O + a folded polypeptide = ADP + phosphate + an unfolded polypeptide.</text>
        <dbReference type="EC" id="5.6.1.7"/>
    </reaction>
</comment>
<comment type="subunit">
    <text evidence="1">Forms a cylinder of 14 subunits composed of two heptameric rings stacked back-to-back. Interacts with the co-chaperonin GroES.</text>
</comment>
<comment type="subcellular location">
    <subcellularLocation>
        <location evidence="1">Cytoplasm</location>
    </subcellularLocation>
</comment>
<comment type="similarity">
    <text evidence="1">Belongs to the chaperonin (HSP60) family.</text>
</comment>
<name>CH60_CLOAB</name>
<protein>
    <recommendedName>
        <fullName evidence="1">Chaperonin GroEL</fullName>
        <ecNumber evidence="1">5.6.1.7</ecNumber>
    </recommendedName>
    <alternativeName>
        <fullName evidence="1">60 kDa chaperonin</fullName>
    </alternativeName>
    <alternativeName>
        <fullName evidence="1">Chaperonin-60</fullName>
        <shortName evidence="1">Cpn60</shortName>
    </alternativeName>
</protein>
<feature type="chain" id="PRO_0000063338" description="Chaperonin GroEL">
    <location>
        <begin position="1"/>
        <end position="543"/>
    </location>
</feature>
<feature type="region of interest" description="Disordered" evidence="2">
    <location>
        <begin position="524"/>
        <end position="543"/>
    </location>
</feature>
<feature type="compositionally biased region" description="Gly residues" evidence="2">
    <location>
        <begin position="533"/>
        <end position="543"/>
    </location>
</feature>
<feature type="binding site" evidence="1">
    <location>
        <begin position="29"/>
        <end position="32"/>
    </location>
    <ligand>
        <name>ATP</name>
        <dbReference type="ChEBI" id="CHEBI:30616"/>
    </ligand>
</feature>
<feature type="binding site" evidence="1">
    <location>
        <begin position="86"/>
        <end position="90"/>
    </location>
    <ligand>
        <name>ATP</name>
        <dbReference type="ChEBI" id="CHEBI:30616"/>
    </ligand>
</feature>
<feature type="binding site" evidence="1">
    <location>
        <position position="413"/>
    </location>
    <ligand>
        <name>ATP</name>
        <dbReference type="ChEBI" id="CHEBI:30616"/>
    </ligand>
</feature>
<feature type="binding site" evidence="1">
    <location>
        <begin position="477"/>
        <end position="479"/>
    </location>
    <ligand>
        <name>ATP</name>
        <dbReference type="ChEBI" id="CHEBI:30616"/>
    </ligand>
</feature>
<feature type="binding site" evidence="1">
    <location>
        <position position="493"/>
    </location>
    <ligand>
        <name>ATP</name>
        <dbReference type="ChEBI" id="CHEBI:30616"/>
    </ligand>
</feature>
<organism>
    <name type="scientific">Clostridium acetobutylicum (strain ATCC 824 / DSM 792 / JCM 1419 / IAM 19013 / LMG 5710 / NBRC 13948 / NRRL B-527 / VKM B-1787 / 2291 / W)</name>
    <dbReference type="NCBI Taxonomy" id="272562"/>
    <lineage>
        <taxon>Bacteria</taxon>
        <taxon>Bacillati</taxon>
        <taxon>Bacillota</taxon>
        <taxon>Clostridia</taxon>
        <taxon>Eubacteriales</taxon>
        <taxon>Clostridiaceae</taxon>
        <taxon>Clostridium</taxon>
    </lineage>
</organism>
<gene>
    <name evidence="1" type="primary">groEL</name>
    <name evidence="1" type="synonym">groL</name>
    <name type="synonym">mopA</name>
    <name type="ordered locus">CA_C2703</name>
</gene>
<keyword id="KW-0067">ATP-binding</keyword>
<keyword id="KW-0143">Chaperone</keyword>
<keyword id="KW-0963">Cytoplasm</keyword>
<keyword id="KW-0413">Isomerase</keyword>
<keyword id="KW-0547">Nucleotide-binding</keyword>
<keyword id="KW-1185">Reference proteome</keyword>
<dbReference type="EC" id="5.6.1.7" evidence="1"/>
<dbReference type="EMBL" id="M74572">
    <property type="protein sequence ID" value="AAA23243.1"/>
    <property type="molecule type" value="Genomic_DNA"/>
</dbReference>
<dbReference type="EMBL" id="AE001437">
    <property type="protein sequence ID" value="AAK80649.1"/>
    <property type="molecule type" value="Genomic_DNA"/>
</dbReference>
<dbReference type="PIR" id="B41872">
    <property type="entry name" value="B41872"/>
</dbReference>
<dbReference type="PIR" id="F97232">
    <property type="entry name" value="F97232"/>
</dbReference>
<dbReference type="RefSeq" id="NP_349309.1">
    <property type="nucleotide sequence ID" value="NC_003030.1"/>
</dbReference>
<dbReference type="RefSeq" id="WP_010965990.1">
    <property type="nucleotide sequence ID" value="NC_003030.1"/>
</dbReference>
<dbReference type="SMR" id="P30717"/>
<dbReference type="STRING" id="272562.CA_C2703"/>
<dbReference type="GeneID" id="44999192"/>
<dbReference type="KEGG" id="cac:CA_C2703"/>
<dbReference type="PATRIC" id="fig|272562.8.peg.2893"/>
<dbReference type="eggNOG" id="COG0459">
    <property type="taxonomic scope" value="Bacteria"/>
</dbReference>
<dbReference type="HOGENOM" id="CLU_016503_3_0_9"/>
<dbReference type="OrthoDB" id="9766614at2"/>
<dbReference type="Proteomes" id="UP000000814">
    <property type="component" value="Chromosome"/>
</dbReference>
<dbReference type="GO" id="GO:0005737">
    <property type="term" value="C:cytoplasm"/>
    <property type="evidence" value="ECO:0007669"/>
    <property type="project" value="UniProtKB-SubCell"/>
</dbReference>
<dbReference type="GO" id="GO:0005524">
    <property type="term" value="F:ATP binding"/>
    <property type="evidence" value="ECO:0007669"/>
    <property type="project" value="UniProtKB-UniRule"/>
</dbReference>
<dbReference type="GO" id="GO:0140662">
    <property type="term" value="F:ATP-dependent protein folding chaperone"/>
    <property type="evidence" value="ECO:0007669"/>
    <property type="project" value="InterPro"/>
</dbReference>
<dbReference type="GO" id="GO:0016853">
    <property type="term" value="F:isomerase activity"/>
    <property type="evidence" value="ECO:0007669"/>
    <property type="project" value="UniProtKB-KW"/>
</dbReference>
<dbReference type="GO" id="GO:0051082">
    <property type="term" value="F:unfolded protein binding"/>
    <property type="evidence" value="ECO:0007669"/>
    <property type="project" value="UniProtKB-UniRule"/>
</dbReference>
<dbReference type="GO" id="GO:0042026">
    <property type="term" value="P:protein refolding"/>
    <property type="evidence" value="ECO:0007669"/>
    <property type="project" value="UniProtKB-UniRule"/>
</dbReference>
<dbReference type="CDD" id="cd03344">
    <property type="entry name" value="GroEL"/>
    <property type="match status" value="1"/>
</dbReference>
<dbReference type="FunFam" id="3.50.7.10:FF:000001">
    <property type="entry name" value="60 kDa chaperonin"/>
    <property type="match status" value="1"/>
</dbReference>
<dbReference type="Gene3D" id="3.50.7.10">
    <property type="entry name" value="GroEL"/>
    <property type="match status" value="1"/>
</dbReference>
<dbReference type="Gene3D" id="1.10.560.10">
    <property type="entry name" value="GroEL-like equatorial domain"/>
    <property type="match status" value="1"/>
</dbReference>
<dbReference type="Gene3D" id="3.30.260.10">
    <property type="entry name" value="TCP-1-like chaperonin intermediate domain"/>
    <property type="match status" value="1"/>
</dbReference>
<dbReference type="HAMAP" id="MF_00600">
    <property type="entry name" value="CH60"/>
    <property type="match status" value="1"/>
</dbReference>
<dbReference type="InterPro" id="IPR018370">
    <property type="entry name" value="Chaperonin_Cpn60_CS"/>
</dbReference>
<dbReference type="InterPro" id="IPR001844">
    <property type="entry name" value="Cpn60/GroEL"/>
</dbReference>
<dbReference type="InterPro" id="IPR002423">
    <property type="entry name" value="Cpn60/GroEL/TCP-1"/>
</dbReference>
<dbReference type="InterPro" id="IPR027409">
    <property type="entry name" value="GroEL-like_apical_dom_sf"/>
</dbReference>
<dbReference type="InterPro" id="IPR027413">
    <property type="entry name" value="GROEL-like_equatorial_sf"/>
</dbReference>
<dbReference type="InterPro" id="IPR027410">
    <property type="entry name" value="TCP-1-like_intermed_sf"/>
</dbReference>
<dbReference type="NCBIfam" id="TIGR02348">
    <property type="entry name" value="GroEL"/>
    <property type="match status" value="1"/>
</dbReference>
<dbReference type="NCBIfam" id="NF000592">
    <property type="entry name" value="PRK00013.1"/>
    <property type="match status" value="1"/>
</dbReference>
<dbReference type="NCBIfam" id="NF009487">
    <property type="entry name" value="PRK12849.1"/>
    <property type="match status" value="1"/>
</dbReference>
<dbReference type="NCBIfam" id="NF009488">
    <property type="entry name" value="PRK12850.1"/>
    <property type="match status" value="1"/>
</dbReference>
<dbReference type="NCBIfam" id="NF009489">
    <property type="entry name" value="PRK12851.1"/>
    <property type="match status" value="1"/>
</dbReference>
<dbReference type="PANTHER" id="PTHR45633">
    <property type="entry name" value="60 KDA HEAT SHOCK PROTEIN, MITOCHONDRIAL"/>
    <property type="match status" value="1"/>
</dbReference>
<dbReference type="Pfam" id="PF00118">
    <property type="entry name" value="Cpn60_TCP1"/>
    <property type="match status" value="1"/>
</dbReference>
<dbReference type="PRINTS" id="PR00298">
    <property type="entry name" value="CHAPERONIN60"/>
</dbReference>
<dbReference type="SUPFAM" id="SSF52029">
    <property type="entry name" value="GroEL apical domain-like"/>
    <property type="match status" value="1"/>
</dbReference>
<dbReference type="SUPFAM" id="SSF48592">
    <property type="entry name" value="GroEL equatorial domain-like"/>
    <property type="match status" value="1"/>
</dbReference>
<dbReference type="SUPFAM" id="SSF54849">
    <property type="entry name" value="GroEL-intermediate domain like"/>
    <property type="match status" value="1"/>
</dbReference>
<dbReference type="PROSITE" id="PS00296">
    <property type="entry name" value="CHAPERONINS_CPN60"/>
    <property type="match status" value="1"/>
</dbReference>
<accession>P30717</accession>
<proteinExistence type="inferred from homology"/>
<reference key="1">
    <citation type="journal article" date="1992" name="J. Bacteriol.">
        <title>Cloning, sequencing, and molecular analysis of the groESL operon of Clostridium acetobutylicum.</title>
        <authorList>
            <person name="Narberhaus F."/>
            <person name="Bahl H."/>
        </authorList>
    </citation>
    <scope>NUCLEOTIDE SEQUENCE [GENOMIC DNA]</scope>
    <source>
        <strain>ATCC 4259 / DSM 1731 / NCIB 619</strain>
    </source>
</reference>
<reference key="2">
    <citation type="journal article" date="2001" name="J. Bacteriol.">
        <title>Genome sequence and comparative analysis of the solvent-producing bacterium Clostridium acetobutylicum.</title>
        <authorList>
            <person name="Noelling J."/>
            <person name="Breton G."/>
            <person name="Omelchenko M.V."/>
            <person name="Makarova K.S."/>
            <person name="Zeng Q."/>
            <person name="Gibson R."/>
            <person name="Lee H.M."/>
            <person name="Dubois J."/>
            <person name="Qiu D."/>
            <person name="Hitti J."/>
            <person name="Wolf Y.I."/>
            <person name="Tatusov R.L."/>
            <person name="Sabathe F."/>
            <person name="Doucette-Stamm L.A."/>
            <person name="Soucaille P."/>
            <person name="Daly M.J."/>
            <person name="Bennett G.N."/>
            <person name="Koonin E.V."/>
            <person name="Smith D.R."/>
        </authorList>
    </citation>
    <scope>NUCLEOTIDE SEQUENCE [LARGE SCALE GENOMIC DNA]</scope>
    <source>
        <strain>ATCC 824 / DSM 792 / JCM 1419 / IAM 19013 / LMG 5710 / NBRC 13948 / NRRL B-527 / VKM B-1787 / 2291 / W</strain>
    </source>
</reference>
<sequence length="543" mass="58074">MAKQILYGEEARRSMQKGVDKLADTVKVTLGPKGRNVVLDKKFGAPLITNDGVSIAKEIELEDPYENMGAQLVKEVATKTNDVAGDGTTTATLLAQAIIREGLKNVTAGANPMLIRNGIRLAVDKTVEGLKKVSKNVNGKEDIARVASISAADPEIGKLIADAMEKVGNEGVITVEESKSMGTELDVVEGMQFDRGYLSPYMVTDQEKMEAVLDDPYILITDKKIANIQEILPLLEQIVQQGKKLLIIADDVEGEALATLVVNKLRGTFNCVAVKAPGFGDRRKDMLRDIAILTGGEVISEELGKDLKDVKVEDLGSAESVKISKENTTIVNGRGDKSAIHDRVAQIRGQIEETTSDFDREKLQERLAKLAGGVAVVKVGAASETELKERKMRIEDALAATKAAVEEGIIAGGGTAYINVLPEVRELTSDEPDVQVGINIIVKALEEPVRQIAANAGLEGSVIIEKIINSEKGIGFDALHEKYVDMLSVGIVDPTKVTRSALQNAASVASTFLTTECAVADIPEKDKPEMPGGAPGMGMGGMY</sequence>
<evidence type="ECO:0000255" key="1">
    <source>
        <dbReference type="HAMAP-Rule" id="MF_00600"/>
    </source>
</evidence>
<evidence type="ECO:0000256" key="2">
    <source>
        <dbReference type="SAM" id="MobiDB-lite"/>
    </source>
</evidence>